<gene>
    <name type="primary">Ndufs2</name>
</gene>
<feature type="transit peptide" description="Mitochondrion" evidence="3">
    <location>
        <begin position="1"/>
        <end position="33"/>
    </location>
</feature>
<feature type="chain" id="PRO_0000019982" description="NADH dehydrogenase [ubiquinone] iron-sulfur protein 2, mitochondrial">
    <location>
        <begin position="34"/>
        <end position="463"/>
    </location>
</feature>
<feature type="binding site" evidence="3">
    <location>
        <position position="326"/>
    </location>
    <ligand>
        <name>[4Fe-4S] cluster</name>
        <dbReference type="ChEBI" id="CHEBI:49883"/>
    </ligand>
</feature>
<feature type="binding site" evidence="3">
    <location>
        <position position="332"/>
    </location>
    <ligand>
        <name>[4Fe-4S] cluster</name>
        <dbReference type="ChEBI" id="CHEBI:49883"/>
    </ligand>
</feature>
<feature type="binding site" evidence="3">
    <location>
        <position position="347"/>
    </location>
    <ligand>
        <name>[4Fe-4S] cluster</name>
        <dbReference type="ChEBI" id="CHEBI:49883"/>
    </ligand>
</feature>
<feature type="modified residue" description="N6-acetyllysine" evidence="12">
    <location>
        <position position="62"/>
    </location>
</feature>
<feature type="modified residue" description="Symmetric dimethylarginine" evidence="2">
    <location>
        <position position="118"/>
    </location>
</feature>
<feature type="sequence conflict" description="In Ref. 2; AAH03898." evidence="10" ref="2">
    <original>M</original>
    <variation>V</variation>
    <location>
        <position position="1"/>
    </location>
</feature>
<feature type="sequence conflict" description="In Ref. 1; BAE30656/BAE31936." evidence="10" ref="1">
    <original>A</original>
    <variation>R</variation>
    <location>
        <position position="2"/>
    </location>
</feature>
<feature type="sequence conflict" description="In Ref. 1; BAE27028." evidence="10" ref="1">
    <original>T</original>
    <variation>A</variation>
    <location>
        <position position="81"/>
    </location>
</feature>
<feature type="sequence conflict" description="In Ref. 1; BAE27028." evidence="10" ref="1">
    <original>A</original>
    <variation>S</variation>
    <location>
        <position position="186"/>
    </location>
</feature>
<feature type="helix" evidence="14">
    <location>
        <begin position="41"/>
        <end position="44"/>
    </location>
</feature>
<feature type="helix" evidence="14">
    <location>
        <begin position="45"/>
        <end position="47"/>
    </location>
</feature>
<feature type="strand" evidence="14">
    <location>
        <begin position="48"/>
        <end position="53"/>
    </location>
</feature>
<feature type="turn" evidence="14">
    <location>
        <begin position="57"/>
        <end position="60"/>
    </location>
</feature>
<feature type="strand" evidence="13">
    <location>
        <begin position="66"/>
        <end position="68"/>
    </location>
</feature>
<feature type="strand" evidence="14">
    <location>
        <begin position="80"/>
        <end position="84"/>
    </location>
</feature>
<feature type="strand" evidence="14">
    <location>
        <begin position="86"/>
        <end position="88"/>
    </location>
</feature>
<feature type="helix" evidence="14">
    <location>
        <begin position="89"/>
        <end position="91"/>
    </location>
</feature>
<feature type="turn" evidence="14">
    <location>
        <begin position="92"/>
        <end position="94"/>
    </location>
</feature>
<feature type="strand" evidence="14">
    <location>
        <begin position="96"/>
        <end position="102"/>
    </location>
</feature>
<feature type="strand" evidence="14">
    <location>
        <begin position="105"/>
        <end position="112"/>
    </location>
</feature>
<feature type="helix" evidence="14">
    <location>
        <begin position="120"/>
        <end position="124"/>
    </location>
</feature>
<feature type="helix" evidence="14">
    <location>
        <begin position="129"/>
        <end position="137"/>
    </location>
</feature>
<feature type="turn" evidence="16">
    <location>
        <begin position="140"/>
        <end position="142"/>
    </location>
</feature>
<feature type="helix" evidence="14">
    <location>
        <begin position="144"/>
        <end position="159"/>
    </location>
</feature>
<feature type="helix" evidence="14">
    <location>
        <begin position="165"/>
        <end position="194"/>
    </location>
</feature>
<feature type="helix" evidence="14">
    <location>
        <begin position="198"/>
        <end position="218"/>
    </location>
</feature>
<feature type="strand" evidence="15">
    <location>
        <begin position="221"/>
        <end position="223"/>
    </location>
</feature>
<feature type="strand" evidence="14">
    <location>
        <begin position="231"/>
        <end position="234"/>
    </location>
</feature>
<feature type="helix" evidence="14">
    <location>
        <begin position="240"/>
        <end position="262"/>
    </location>
</feature>
<feature type="helix" evidence="14">
    <location>
        <begin position="266"/>
        <end position="272"/>
    </location>
</feature>
<feature type="helix" evidence="14">
    <location>
        <begin position="280"/>
        <end position="285"/>
    </location>
</feature>
<feature type="helix" evidence="14">
    <location>
        <begin position="291"/>
        <end position="294"/>
    </location>
</feature>
<feature type="turn" evidence="14">
    <location>
        <begin position="295"/>
        <end position="297"/>
    </location>
</feature>
<feature type="helix" evidence="14">
    <location>
        <begin position="302"/>
        <end position="305"/>
    </location>
</feature>
<feature type="helix" evidence="14">
    <location>
        <begin position="311"/>
        <end position="313"/>
    </location>
</feature>
<feature type="strand" evidence="14">
    <location>
        <begin position="318"/>
        <end position="320"/>
    </location>
</feature>
<feature type="strand" evidence="16">
    <location>
        <begin position="321"/>
        <end position="323"/>
    </location>
</feature>
<feature type="helix" evidence="14">
    <location>
        <begin position="326"/>
        <end position="350"/>
    </location>
</feature>
<feature type="turn" evidence="14">
    <location>
        <begin position="361"/>
        <end position="363"/>
    </location>
</feature>
<feature type="helix" evidence="14">
    <location>
        <begin position="368"/>
        <end position="371"/>
    </location>
</feature>
<feature type="helix" evidence="14">
    <location>
        <begin position="375"/>
        <end position="386"/>
    </location>
</feature>
<feature type="strand" evidence="14">
    <location>
        <begin position="393"/>
        <end position="402"/>
    </location>
</feature>
<feature type="strand" evidence="14">
    <location>
        <begin position="405"/>
        <end position="413"/>
    </location>
</feature>
<feature type="strand" evidence="14">
    <location>
        <begin position="415"/>
        <end position="418"/>
    </location>
</feature>
<feature type="strand" evidence="14">
    <location>
        <begin position="420"/>
        <end position="425"/>
    </location>
</feature>
<feature type="helix" evidence="14">
    <location>
        <begin position="427"/>
        <end position="433"/>
    </location>
</feature>
<feature type="helix" evidence="14">
    <location>
        <begin position="435"/>
        <end position="438"/>
    </location>
</feature>
<feature type="turn" evidence="14">
    <location>
        <begin position="439"/>
        <end position="441"/>
    </location>
</feature>
<feature type="helix" evidence="14">
    <location>
        <begin position="444"/>
        <end position="454"/>
    </location>
</feature>
<feature type="helix" evidence="14">
    <location>
        <begin position="458"/>
        <end position="462"/>
    </location>
</feature>
<dbReference type="EC" id="7.1.1.2" evidence="4 5 7"/>
<dbReference type="EMBL" id="AK078474">
    <property type="protein sequence ID" value="BAC37293.1"/>
    <property type="molecule type" value="mRNA"/>
</dbReference>
<dbReference type="EMBL" id="AK146269">
    <property type="protein sequence ID" value="BAE27028.1"/>
    <property type="molecule type" value="mRNA"/>
</dbReference>
<dbReference type="EMBL" id="AK150431">
    <property type="protein sequence ID" value="BAE29554.1"/>
    <property type="molecule type" value="mRNA"/>
</dbReference>
<dbReference type="EMBL" id="AK151746">
    <property type="protein sequence ID" value="BAE30656.1"/>
    <property type="molecule type" value="mRNA"/>
</dbReference>
<dbReference type="EMBL" id="AK153364">
    <property type="protein sequence ID" value="BAE31936.1"/>
    <property type="molecule type" value="mRNA"/>
</dbReference>
<dbReference type="EMBL" id="AK165426">
    <property type="protein sequence ID" value="BAE38181.1"/>
    <property type="molecule type" value="mRNA"/>
</dbReference>
<dbReference type="EMBL" id="BC003898">
    <property type="protein sequence ID" value="AAH03898.1"/>
    <property type="status" value="ALT_INIT"/>
    <property type="molecule type" value="mRNA"/>
</dbReference>
<dbReference type="EMBL" id="BC016097">
    <property type="protein sequence ID" value="AAH16097.1"/>
    <property type="molecule type" value="mRNA"/>
</dbReference>
<dbReference type="CCDS" id="CCDS15484.1"/>
<dbReference type="RefSeq" id="NP_694704.1">
    <property type="nucleotide sequence ID" value="NM_153064.6"/>
</dbReference>
<dbReference type="RefSeq" id="XP_030109284.1">
    <property type="nucleotide sequence ID" value="XM_030253424.2"/>
</dbReference>
<dbReference type="PDB" id="6G2J">
    <property type="method" value="EM"/>
    <property type="resolution" value="3.30 A"/>
    <property type="chains" value="D=1-463"/>
</dbReference>
<dbReference type="PDB" id="6G72">
    <property type="method" value="EM"/>
    <property type="resolution" value="3.90 A"/>
    <property type="chains" value="D=1-463"/>
</dbReference>
<dbReference type="PDB" id="6ZR2">
    <property type="method" value="EM"/>
    <property type="resolution" value="3.10 A"/>
    <property type="chains" value="D=1-463"/>
</dbReference>
<dbReference type="PDB" id="6ZTQ">
    <property type="method" value="EM"/>
    <property type="resolution" value="3.00 A"/>
    <property type="chains" value="D=1-463"/>
</dbReference>
<dbReference type="PDB" id="7AK5">
    <property type="method" value="EM"/>
    <property type="resolution" value="3.17 A"/>
    <property type="chains" value="D=1-463"/>
</dbReference>
<dbReference type="PDB" id="7AK6">
    <property type="method" value="EM"/>
    <property type="resolution" value="3.82 A"/>
    <property type="chains" value="D=1-463"/>
</dbReference>
<dbReference type="PDB" id="7B93">
    <property type="method" value="EM"/>
    <property type="resolution" value="3.04 A"/>
    <property type="chains" value="D=1-463"/>
</dbReference>
<dbReference type="PDB" id="7PSA">
    <property type="method" value="EM"/>
    <property type="resolution" value="3.40 A"/>
    <property type="chains" value="D=1-463"/>
</dbReference>
<dbReference type="PDB" id="8C2S">
    <property type="method" value="EM"/>
    <property type="resolution" value="3.90 A"/>
    <property type="chains" value="D=1-463"/>
</dbReference>
<dbReference type="PDB" id="8CA3">
    <property type="method" value="EM"/>
    <property type="resolution" value="3.20 A"/>
    <property type="chains" value="D=1-463"/>
</dbReference>
<dbReference type="PDB" id="8CA5">
    <property type="method" value="EM"/>
    <property type="resolution" value="3.90 A"/>
    <property type="chains" value="D=1-463"/>
</dbReference>
<dbReference type="PDB" id="8IAO">
    <property type="method" value="EM"/>
    <property type="resolution" value="4.20 A"/>
    <property type="chains" value="D=1-463"/>
</dbReference>
<dbReference type="PDB" id="8IAP">
    <property type="method" value="EM"/>
    <property type="resolution" value="3.20 A"/>
    <property type="chains" value="D=1-463"/>
</dbReference>
<dbReference type="PDB" id="8IAQ">
    <property type="method" value="EM"/>
    <property type="resolution" value="3.40 A"/>
    <property type="chains" value="D=1-463"/>
</dbReference>
<dbReference type="PDB" id="8IB4">
    <property type="method" value="EM"/>
    <property type="resolution" value="4.30 A"/>
    <property type="chains" value="D=1-463"/>
</dbReference>
<dbReference type="PDB" id="8IB5">
    <property type="method" value="EM"/>
    <property type="resolution" value="3.30 A"/>
    <property type="chains" value="D=1-463"/>
</dbReference>
<dbReference type="PDB" id="8IB6">
    <property type="method" value="EM"/>
    <property type="resolution" value="3.30 A"/>
    <property type="chains" value="D=1-463"/>
</dbReference>
<dbReference type="PDB" id="8IB9">
    <property type="method" value="EM"/>
    <property type="resolution" value="4.30 A"/>
    <property type="chains" value="D=1-463"/>
</dbReference>
<dbReference type="PDB" id="8IBA">
    <property type="method" value="EM"/>
    <property type="resolution" value="3.20 A"/>
    <property type="chains" value="D=1-463"/>
</dbReference>
<dbReference type="PDB" id="8IBB">
    <property type="method" value="EM"/>
    <property type="resolution" value="3.30 A"/>
    <property type="chains" value="D=1-463"/>
</dbReference>
<dbReference type="PDB" id="8IBD">
    <property type="method" value="EM"/>
    <property type="resolution" value="4.20 A"/>
    <property type="chains" value="D=1-463"/>
</dbReference>
<dbReference type="PDB" id="8IBE">
    <property type="method" value="EM"/>
    <property type="resolution" value="3.30 A"/>
    <property type="chains" value="D=1-463"/>
</dbReference>
<dbReference type="PDB" id="8IBF">
    <property type="method" value="EM"/>
    <property type="resolution" value="3.30 A"/>
    <property type="chains" value="D=1-463"/>
</dbReference>
<dbReference type="PDB" id="8IC2">
    <property type="method" value="EM"/>
    <property type="resolution" value="6.30 A"/>
    <property type="chains" value="D=1-463"/>
</dbReference>
<dbReference type="PDB" id="8IC3">
    <property type="method" value="EM"/>
    <property type="resolution" value="3.20 A"/>
    <property type="chains" value="D=1-463"/>
</dbReference>
<dbReference type="PDB" id="8IC4">
    <property type="method" value="EM"/>
    <property type="resolution" value="3.20 A"/>
    <property type="chains" value="D=1-463"/>
</dbReference>
<dbReference type="PDB" id="8OLT">
    <property type="method" value="EM"/>
    <property type="resolution" value="2.84 A"/>
    <property type="chains" value="D=1-463"/>
</dbReference>
<dbReference type="PDB" id="8OM1">
    <property type="method" value="EM"/>
    <property type="resolution" value="2.39 A"/>
    <property type="chains" value="D=1-463"/>
</dbReference>
<dbReference type="PDB" id="8PW5">
    <property type="method" value="EM"/>
    <property type="resolution" value="3.60 A"/>
    <property type="chains" value="D1=1-463"/>
</dbReference>
<dbReference type="PDB" id="8PW6">
    <property type="method" value="EM"/>
    <property type="resolution" value="3.30 A"/>
    <property type="chains" value="D1=1-463"/>
</dbReference>
<dbReference type="PDB" id="8PW7">
    <property type="method" value="EM"/>
    <property type="resolution" value="3.50 A"/>
    <property type="chains" value="D1=1-463"/>
</dbReference>
<dbReference type="PDB" id="8RGP">
    <property type="method" value="EM"/>
    <property type="resolution" value="3.00 A"/>
    <property type="chains" value="D=1-463"/>
</dbReference>
<dbReference type="PDB" id="8RGQ">
    <property type="method" value="EM"/>
    <property type="resolution" value="3.00 A"/>
    <property type="chains" value="D=1-463"/>
</dbReference>
<dbReference type="PDB" id="8RGR">
    <property type="method" value="EM"/>
    <property type="resolution" value="2.90 A"/>
    <property type="chains" value="D=1-463"/>
</dbReference>
<dbReference type="PDB" id="8RGT">
    <property type="method" value="EM"/>
    <property type="resolution" value="3.10 A"/>
    <property type="chains" value="D=1-463"/>
</dbReference>
<dbReference type="PDB" id="8UCA">
    <property type="method" value="EM"/>
    <property type="resolution" value="3.70 A"/>
    <property type="chains" value="S2/s2=1-463"/>
</dbReference>
<dbReference type="PDB" id="8XNL">
    <property type="method" value="EM"/>
    <property type="resolution" value="3.10 A"/>
    <property type="chains" value="D=1-463"/>
</dbReference>
<dbReference type="PDB" id="8XNM">
    <property type="method" value="EM"/>
    <property type="resolution" value="3.50 A"/>
    <property type="chains" value="D=1-463"/>
</dbReference>
<dbReference type="PDB" id="8XNN">
    <property type="method" value="EM"/>
    <property type="resolution" value="3.60 A"/>
    <property type="chains" value="D=1-463"/>
</dbReference>
<dbReference type="PDB" id="8XNO">
    <property type="method" value="EM"/>
    <property type="resolution" value="3.40 A"/>
    <property type="chains" value="D=1-463"/>
</dbReference>
<dbReference type="PDB" id="8XNP">
    <property type="method" value="EM"/>
    <property type="resolution" value="3.50 A"/>
    <property type="chains" value="D=1-463"/>
</dbReference>
<dbReference type="PDB" id="8XNQ">
    <property type="method" value="EM"/>
    <property type="resolution" value="3.70 A"/>
    <property type="chains" value="D=1-463"/>
</dbReference>
<dbReference type="PDB" id="8XNR">
    <property type="method" value="EM"/>
    <property type="resolution" value="3.30 A"/>
    <property type="chains" value="D=1-463"/>
</dbReference>
<dbReference type="PDB" id="8XNS">
    <property type="method" value="EM"/>
    <property type="resolution" value="3.50 A"/>
    <property type="chains" value="D=1-463"/>
</dbReference>
<dbReference type="PDB" id="8XNT">
    <property type="method" value="EM"/>
    <property type="resolution" value="4.10 A"/>
    <property type="chains" value="D=1-463"/>
</dbReference>
<dbReference type="PDB" id="8XNU">
    <property type="method" value="EM"/>
    <property type="resolution" value="3.60 A"/>
    <property type="chains" value="D=1-463"/>
</dbReference>
<dbReference type="PDB" id="8XNV">
    <property type="method" value="EM"/>
    <property type="resolution" value="3.30 A"/>
    <property type="chains" value="D=1-463"/>
</dbReference>
<dbReference type="PDB" id="8XNW">
    <property type="method" value="EM"/>
    <property type="resolution" value="3.60 A"/>
    <property type="chains" value="D=1-463"/>
</dbReference>
<dbReference type="PDB" id="8XNX">
    <property type="method" value="EM"/>
    <property type="resolution" value="3.50 A"/>
    <property type="chains" value="D=1-463"/>
</dbReference>
<dbReference type="PDB" id="8XNY">
    <property type="method" value="EM"/>
    <property type="resolution" value="4.10 A"/>
    <property type="chains" value="D=1-463"/>
</dbReference>
<dbReference type="PDB" id="8XNZ">
    <property type="method" value="EM"/>
    <property type="resolution" value="3.30 A"/>
    <property type="chains" value="D=1-463"/>
</dbReference>
<dbReference type="PDB" id="8XO0">
    <property type="method" value="EM"/>
    <property type="resolution" value="4.20 A"/>
    <property type="chains" value="D=1-463"/>
</dbReference>
<dbReference type="PDBsum" id="6G2J"/>
<dbReference type="PDBsum" id="6G72"/>
<dbReference type="PDBsum" id="6ZR2"/>
<dbReference type="PDBsum" id="6ZTQ"/>
<dbReference type="PDBsum" id="7AK5"/>
<dbReference type="PDBsum" id="7AK6"/>
<dbReference type="PDBsum" id="7B93"/>
<dbReference type="PDBsum" id="7PSA"/>
<dbReference type="PDBsum" id="8C2S"/>
<dbReference type="PDBsum" id="8CA3"/>
<dbReference type="PDBsum" id="8CA5"/>
<dbReference type="PDBsum" id="8IAO"/>
<dbReference type="PDBsum" id="8IAP"/>
<dbReference type="PDBsum" id="8IAQ"/>
<dbReference type="PDBsum" id="8IB4"/>
<dbReference type="PDBsum" id="8IB5"/>
<dbReference type="PDBsum" id="8IB6"/>
<dbReference type="PDBsum" id="8IB9"/>
<dbReference type="PDBsum" id="8IBA"/>
<dbReference type="PDBsum" id="8IBB"/>
<dbReference type="PDBsum" id="8IBD"/>
<dbReference type="PDBsum" id="8IBE"/>
<dbReference type="PDBsum" id="8IBF"/>
<dbReference type="PDBsum" id="8IC2"/>
<dbReference type="PDBsum" id="8IC3"/>
<dbReference type="PDBsum" id="8IC4"/>
<dbReference type="PDBsum" id="8OLT"/>
<dbReference type="PDBsum" id="8OM1"/>
<dbReference type="PDBsum" id="8PW5"/>
<dbReference type="PDBsum" id="8PW6"/>
<dbReference type="PDBsum" id="8PW7"/>
<dbReference type="PDBsum" id="8RGP"/>
<dbReference type="PDBsum" id="8RGQ"/>
<dbReference type="PDBsum" id="8RGR"/>
<dbReference type="PDBsum" id="8RGT"/>
<dbReference type="PDBsum" id="8UCA"/>
<dbReference type="PDBsum" id="8XNL"/>
<dbReference type="PDBsum" id="8XNM"/>
<dbReference type="PDBsum" id="8XNN"/>
<dbReference type="PDBsum" id="8XNO"/>
<dbReference type="PDBsum" id="8XNP"/>
<dbReference type="PDBsum" id="8XNQ"/>
<dbReference type="PDBsum" id="8XNR"/>
<dbReference type="PDBsum" id="8XNS"/>
<dbReference type="PDBsum" id="8XNT"/>
<dbReference type="PDBsum" id="8XNU"/>
<dbReference type="PDBsum" id="8XNV"/>
<dbReference type="PDBsum" id="8XNW"/>
<dbReference type="PDBsum" id="8XNX"/>
<dbReference type="PDBsum" id="8XNY"/>
<dbReference type="PDBsum" id="8XNZ"/>
<dbReference type="PDBsum" id="8XO0"/>
<dbReference type="EMDB" id="EMD-16398"/>
<dbReference type="EMDB" id="EMD-16516"/>
<dbReference type="EMDB" id="EMD-16518"/>
<dbReference type="EMDB" id="EMD-16962"/>
<dbReference type="EMDB" id="EMD-16965"/>
<dbReference type="EMDB" id="EMD-17989"/>
<dbReference type="EMDB" id="EMD-17990"/>
<dbReference type="EMDB" id="EMD-17991"/>
<dbReference type="EMDB" id="EMD-19145"/>
<dbReference type="EMDB" id="EMD-19146"/>
<dbReference type="EMDB" id="EMD-19147"/>
<dbReference type="EMDB" id="EMD-19148"/>
<dbReference type="EMDB" id="EMD-35313"/>
<dbReference type="EMDB" id="EMD-35314"/>
<dbReference type="EMDB" id="EMD-35315"/>
<dbReference type="EMDB" id="EMD-35331"/>
<dbReference type="EMDB" id="EMD-35332"/>
<dbReference type="EMDB" id="EMD-35333"/>
<dbReference type="EMDB" id="EMD-35336"/>
<dbReference type="EMDB" id="EMD-35337"/>
<dbReference type="EMDB" id="EMD-35338"/>
<dbReference type="EMDB" id="EMD-35340"/>
<dbReference type="EMDB" id="EMD-35341"/>
<dbReference type="EMDB" id="EMD-35342"/>
<dbReference type="EMDB" id="EMD-35352"/>
<dbReference type="EMDB" id="EMD-35353"/>
<dbReference type="EMDB" id="EMD-35354"/>
<dbReference type="EMDB" id="EMD-38506"/>
<dbReference type="EMDB" id="EMD-38507"/>
<dbReference type="EMDB" id="EMD-38508"/>
<dbReference type="EMDB" id="EMD-38509"/>
<dbReference type="EMDB" id="EMD-38510"/>
<dbReference type="EMDB" id="EMD-38511"/>
<dbReference type="EMDB" id="EMD-38512"/>
<dbReference type="EMDB" id="EMD-38513"/>
<dbReference type="EMDB" id="EMD-38514"/>
<dbReference type="EMDB" id="EMD-38515"/>
<dbReference type="EMDB" id="EMD-38516"/>
<dbReference type="EMDB" id="EMD-38517"/>
<dbReference type="EMDB" id="EMD-38518"/>
<dbReference type="EMDB" id="EMD-38519"/>
<dbReference type="EMDB" id="EMD-38520"/>
<dbReference type="EMDB" id="EMD-38521"/>
<dbReference type="EMDB" id="EMD-42122"/>
<dbReference type="EMDB" id="EMD-4356"/>
<dbReference type="SMR" id="Q91WD5"/>
<dbReference type="BioGRID" id="230541">
    <property type="interactions" value="70"/>
</dbReference>
<dbReference type="ComplexPortal" id="CPX-266">
    <property type="entry name" value="Mitochondrial respiratory chain complex I"/>
</dbReference>
<dbReference type="CORUM" id="Q91WD5"/>
<dbReference type="FunCoup" id="Q91WD5">
    <property type="interactions" value="2127"/>
</dbReference>
<dbReference type="IntAct" id="Q91WD5">
    <property type="interactions" value="15"/>
</dbReference>
<dbReference type="MINT" id="Q91WD5"/>
<dbReference type="STRING" id="10090.ENSMUSP00000013737"/>
<dbReference type="GlyGen" id="Q91WD5">
    <property type="glycosylation" value="1 site, 1 O-linked glycan (1 site)"/>
</dbReference>
<dbReference type="iPTMnet" id="Q91WD5"/>
<dbReference type="PhosphoSitePlus" id="Q91WD5"/>
<dbReference type="SwissPalm" id="Q91WD5"/>
<dbReference type="jPOST" id="Q91WD5"/>
<dbReference type="PaxDb" id="10090-ENSMUSP00000013737"/>
<dbReference type="PeptideAtlas" id="Q91WD5"/>
<dbReference type="ProteomicsDB" id="286170"/>
<dbReference type="Pumba" id="Q91WD5"/>
<dbReference type="Antibodypedia" id="34301">
    <property type="antibodies" value="310 antibodies from 32 providers"/>
</dbReference>
<dbReference type="DNASU" id="226646"/>
<dbReference type="Ensembl" id="ENSMUST00000013737.13">
    <property type="protein sequence ID" value="ENSMUSP00000013737.7"/>
    <property type="gene ID" value="ENSMUSG00000013593.13"/>
</dbReference>
<dbReference type="GeneID" id="226646"/>
<dbReference type="KEGG" id="mmu:226646"/>
<dbReference type="UCSC" id="uc007dnm.1">
    <property type="organism name" value="mouse"/>
</dbReference>
<dbReference type="AGR" id="MGI:2385112"/>
<dbReference type="CTD" id="4720"/>
<dbReference type="MGI" id="MGI:2385112">
    <property type="gene designation" value="Ndufs2"/>
</dbReference>
<dbReference type="VEuPathDB" id="HostDB:ENSMUSG00000013593"/>
<dbReference type="eggNOG" id="KOG2870">
    <property type="taxonomic scope" value="Eukaryota"/>
</dbReference>
<dbReference type="GeneTree" id="ENSGT00390000009529"/>
<dbReference type="HOGENOM" id="CLU_015134_1_2_1"/>
<dbReference type="InParanoid" id="Q91WD5"/>
<dbReference type="OMA" id="TRMDYLT"/>
<dbReference type="OrthoDB" id="1009at2759"/>
<dbReference type="PhylomeDB" id="Q91WD5"/>
<dbReference type="TreeFam" id="TF300370"/>
<dbReference type="Reactome" id="R-MMU-611105">
    <property type="pathway name" value="Respiratory electron transport"/>
</dbReference>
<dbReference type="Reactome" id="R-MMU-6799198">
    <property type="pathway name" value="Complex I biogenesis"/>
</dbReference>
<dbReference type="BioGRID-ORCS" id="226646">
    <property type="hits" value="22 hits in 80 CRISPR screens"/>
</dbReference>
<dbReference type="CD-CODE" id="CE726F99">
    <property type="entry name" value="Postsynaptic density"/>
</dbReference>
<dbReference type="ChiTaRS" id="Ndufs2">
    <property type="organism name" value="mouse"/>
</dbReference>
<dbReference type="PRO" id="PR:Q91WD5"/>
<dbReference type="Proteomes" id="UP000000589">
    <property type="component" value="Chromosome 1"/>
</dbReference>
<dbReference type="RNAct" id="Q91WD5">
    <property type="molecule type" value="protein"/>
</dbReference>
<dbReference type="Bgee" id="ENSMUSG00000013593">
    <property type="expression patterns" value="Expressed in cardiac muscle of left ventricle and 275 other cell types or tissues"/>
</dbReference>
<dbReference type="ExpressionAtlas" id="Q91WD5">
    <property type="expression patterns" value="baseline and differential"/>
</dbReference>
<dbReference type="GO" id="GO:0005743">
    <property type="term" value="C:mitochondrial inner membrane"/>
    <property type="evidence" value="ECO:0000314"/>
    <property type="project" value="UniProtKB"/>
</dbReference>
<dbReference type="GO" id="GO:0005739">
    <property type="term" value="C:mitochondrion"/>
    <property type="evidence" value="ECO:0007005"/>
    <property type="project" value="MGI"/>
</dbReference>
<dbReference type="GO" id="GO:0045271">
    <property type="term" value="C:respiratory chain complex I"/>
    <property type="evidence" value="ECO:0000314"/>
    <property type="project" value="UniProtKB"/>
</dbReference>
<dbReference type="GO" id="GO:0051539">
    <property type="term" value="F:4 iron, 4 sulfur cluster binding"/>
    <property type="evidence" value="ECO:0007669"/>
    <property type="project" value="UniProtKB-KW"/>
</dbReference>
<dbReference type="GO" id="GO:0046872">
    <property type="term" value="F:metal ion binding"/>
    <property type="evidence" value="ECO:0007669"/>
    <property type="project" value="UniProtKB-KW"/>
</dbReference>
<dbReference type="GO" id="GO:0051287">
    <property type="term" value="F:NAD binding"/>
    <property type="evidence" value="ECO:0007669"/>
    <property type="project" value="InterPro"/>
</dbReference>
<dbReference type="GO" id="GO:0008137">
    <property type="term" value="F:NADH dehydrogenase (ubiquinone) activity"/>
    <property type="evidence" value="ECO:0000315"/>
    <property type="project" value="UniProtKB"/>
</dbReference>
<dbReference type="GO" id="GO:0019826">
    <property type="term" value="F:oxygen sensor activity"/>
    <property type="evidence" value="ECO:0000315"/>
    <property type="project" value="UniProtKB"/>
</dbReference>
<dbReference type="GO" id="GO:0048038">
    <property type="term" value="F:quinone binding"/>
    <property type="evidence" value="ECO:0007669"/>
    <property type="project" value="InterPro"/>
</dbReference>
<dbReference type="GO" id="GO:0031625">
    <property type="term" value="F:ubiquitin protein ligase binding"/>
    <property type="evidence" value="ECO:0007669"/>
    <property type="project" value="Ensembl"/>
</dbReference>
<dbReference type="GO" id="GO:0009060">
    <property type="term" value="P:aerobic respiration"/>
    <property type="evidence" value="ECO:0000303"/>
    <property type="project" value="ComplexPortal"/>
</dbReference>
<dbReference type="GO" id="GO:0071453">
    <property type="term" value="P:cellular response to oxygen levels"/>
    <property type="evidence" value="ECO:0000315"/>
    <property type="project" value="UniProtKB"/>
</dbReference>
<dbReference type="GO" id="GO:0042063">
    <property type="term" value="P:gliogenesis"/>
    <property type="evidence" value="ECO:0000315"/>
    <property type="project" value="UniProtKB"/>
</dbReference>
<dbReference type="GO" id="GO:0006120">
    <property type="term" value="P:mitochondrial electron transport, NADH to ubiquinone"/>
    <property type="evidence" value="ECO:0000250"/>
    <property type="project" value="UniProtKB"/>
</dbReference>
<dbReference type="GO" id="GO:0032981">
    <property type="term" value="P:mitochondrial respiratory chain complex I assembly"/>
    <property type="evidence" value="ECO:0000315"/>
    <property type="project" value="UniProtKB"/>
</dbReference>
<dbReference type="GO" id="GO:0061351">
    <property type="term" value="P:neural precursor cell proliferation"/>
    <property type="evidence" value="ECO:0000315"/>
    <property type="project" value="UniProtKB"/>
</dbReference>
<dbReference type="GO" id="GO:0022008">
    <property type="term" value="P:neurogenesis"/>
    <property type="evidence" value="ECO:0000315"/>
    <property type="project" value="UniProtKB"/>
</dbReference>
<dbReference type="GO" id="GO:0042776">
    <property type="term" value="P:proton motive force-driven mitochondrial ATP synthesis"/>
    <property type="evidence" value="ECO:0000303"/>
    <property type="project" value="ComplexPortal"/>
</dbReference>
<dbReference type="FunFam" id="1.10.645.10:FF:000005">
    <property type="entry name" value="NADH-quinone oxidoreductase subunit D"/>
    <property type="match status" value="1"/>
</dbReference>
<dbReference type="Gene3D" id="1.10.645.10">
    <property type="entry name" value="Cytochrome-c3 Hydrogenase, chain B"/>
    <property type="match status" value="1"/>
</dbReference>
<dbReference type="HAMAP" id="MF_01358">
    <property type="entry name" value="NDH1_NuoD"/>
    <property type="match status" value="1"/>
</dbReference>
<dbReference type="InterPro" id="IPR001135">
    <property type="entry name" value="NADH_Q_OxRdtase_suD"/>
</dbReference>
<dbReference type="InterPro" id="IPR014029">
    <property type="entry name" value="NADH_UbQ_OxRdtase_49kDa_CS"/>
</dbReference>
<dbReference type="InterPro" id="IPR022885">
    <property type="entry name" value="NDH1_su_D/H"/>
</dbReference>
<dbReference type="InterPro" id="IPR029014">
    <property type="entry name" value="NiFe-Hase_large"/>
</dbReference>
<dbReference type="NCBIfam" id="TIGR01962">
    <property type="entry name" value="NuoD"/>
    <property type="match status" value="1"/>
</dbReference>
<dbReference type="NCBIfam" id="NF004739">
    <property type="entry name" value="PRK06075.1"/>
    <property type="match status" value="1"/>
</dbReference>
<dbReference type="PANTHER" id="PTHR11993:SF10">
    <property type="entry name" value="NADH DEHYDROGENASE [UBIQUINONE] IRON-SULFUR PROTEIN 2, MITOCHONDRIAL"/>
    <property type="match status" value="1"/>
</dbReference>
<dbReference type="PANTHER" id="PTHR11993">
    <property type="entry name" value="NADH-UBIQUINONE OXIDOREDUCTASE 49 KDA SUBUNIT"/>
    <property type="match status" value="1"/>
</dbReference>
<dbReference type="Pfam" id="PF00346">
    <property type="entry name" value="Complex1_49kDa"/>
    <property type="match status" value="1"/>
</dbReference>
<dbReference type="SUPFAM" id="SSF56762">
    <property type="entry name" value="HydB/Nqo4-like"/>
    <property type="match status" value="1"/>
</dbReference>
<dbReference type="PROSITE" id="PS00535">
    <property type="entry name" value="COMPLEX1_49K"/>
    <property type="match status" value="1"/>
</dbReference>
<name>NDUS2_MOUSE</name>
<organism>
    <name type="scientific">Mus musculus</name>
    <name type="common">Mouse</name>
    <dbReference type="NCBI Taxonomy" id="10090"/>
    <lineage>
        <taxon>Eukaryota</taxon>
        <taxon>Metazoa</taxon>
        <taxon>Chordata</taxon>
        <taxon>Craniata</taxon>
        <taxon>Vertebrata</taxon>
        <taxon>Euteleostomi</taxon>
        <taxon>Mammalia</taxon>
        <taxon>Eutheria</taxon>
        <taxon>Euarchontoglires</taxon>
        <taxon>Glires</taxon>
        <taxon>Rodentia</taxon>
        <taxon>Myomorpha</taxon>
        <taxon>Muroidea</taxon>
        <taxon>Muridae</taxon>
        <taxon>Murinae</taxon>
        <taxon>Mus</taxon>
        <taxon>Mus</taxon>
    </lineage>
</organism>
<accession>Q91WD5</accession>
<accession>Q3TNA8</accession>
<accession>Q3U5Y9</accession>
<accession>Q3UJX7</accession>
<accession>Q99L23</accession>
<sequence>MAALRALRCLRGVGAPVLRPGSGIRLPSQPSRGARQWQPDIEWAEQFSGAVMYPSKETAHWKPPPWNDVDILKEKAVTNMTLNFGPQHPAAHGVLRLVLELSGEMVRKCDPHIGLLHRGTEKLIEYKTYLQALPYFDRLDYVSMMCNEQAYSIAVEKLLNIQPPPRAQWIRVLFGEITRILNHIMAVTTHALDIGAMTPFFWMFEEREKMFEFYERVSGARMHAAYIRPGGVHQDLPLGLLDDIYEFSKNFSLRIDEVEEMLTNNRIWRNRTVDIGVVTAEDALNYGFSGVMLRGSGIQWDLRKTQPYDVYDQVEFDVPIGSRGDCYDRYLCRVEEMRQSLRIIEQCLNKMPPGEIKVDDAKVSPPKRAEMKTSMESLIHHFKLYTEGYQVPPGATYTAIEAPKGEFGVYLVSDGSSRPYRCKIKAPGFAHLAGLDKMSKGHMLADVVAIIGTQDIVFGEIDR</sequence>
<reference key="1">
    <citation type="journal article" date="2005" name="Science">
        <title>The transcriptional landscape of the mammalian genome.</title>
        <authorList>
            <person name="Carninci P."/>
            <person name="Kasukawa T."/>
            <person name="Katayama S."/>
            <person name="Gough J."/>
            <person name="Frith M.C."/>
            <person name="Maeda N."/>
            <person name="Oyama R."/>
            <person name="Ravasi T."/>
            <person name="Lenhard B."/>
            <person name="Wells C."/>
            <person name="Kodzius R."/>
            <person name="Shimokawa K."/>
            <person name="Bajic V.B."/>
            <person name="Brenner S.E."/>
            <person name="Batalov S."/>
            <person name="Forrest A.R."/>
            <person name="Zavolan M."/>
            <person name="Davis M.J."/>
            <person name="Wilming L.G."/>
            <person name="Aidinis V."/>
            <person name="Allen J.E."/>
            <person name="Ambesi-Impiombato A."/>
            <person name="Apweiler R."/>
            <person name="Aturaliya R.N."/>
            <person name="Bailey T.L."/>
            <person name="Bansal M."/>
            <person name="Baxter L."/>
            <person name="Beisel K.W."/>
            <person name="Bersano T."/>
            <person name="Bono H."/>
            <person name="Chalk A.M."/>
            <person name="Chiu K.P."/>
            <person name="Choudhary V."/>
            <person name="Christoffels A."/>
            <person name="Clutterbuck D.R."/>
            <person name="Crowe M.L."/>
            <person name="Dalla E."/>
            <person name="Dalrymple B.P."/>
            <person name="de Bono B."/>
            <person name="Della Gatta G."/>
            <person name="di Bernardo D."/>
            <person name="Down T."/>
            <person name="Engstrom P."/>
            <person name="Fagiolini M."/>
            <person name="Faulkner G."/>
            <person name="Fletcher C.F."/>
            <person name="Fukushima T."/>
            <person name="Furuno M."/>
            <person name="Futaki S."/>
            <person name="Gariboldi M."/>
            <person name="Georgii-Hemming P."/>
            <person name="Gingeras T.R."/>
            <person name="Gojobori T."/>
            <person name="Green R.E."/>
            <person name="Gustincich S."/>
            <person name="Harbers M."/>
            <person name="Hayashi Y."/>
            <person name="Hensch T.K."/>
            <person name="Hirokawa N."/>
            <person name="Hill D."/>
            <person name="Huminiecki L."/>
            <person name="Iacono M."/>
            <person name="Ikeo K."/>
            <person name="Iwama A."/>
            <person name="Ishikawa T."/>
            <person name="Jakt M."/>
            <person name="Kanapin A."/>
            <person name="Katoh M."/>
            <person name="Kawasawa Y."/>
            <person name="Kelso J."/>
            <person name="Kitamura H."/>
            <person name="Kitano H."/>
            <person name="Kollias G."/>
            <person name="Krishnan S.P."/>
            <person name="Kruger A."/>
            <person name="Kummerfeld S.K."/>
            <person name="Kurochkin I.V."/>
            <person name="Lareau L.F."/>
            <person name="Lazarevic D."/>
            <person name="Lipovich L."/>
            <person name="Liu J."/>
            <person name="Liuni S."/>
            <person name="McWilliam S."/>
            <person name="Madan Babu M."/>
            <person name="Madera M."/>
            <person name="Marchionni L."/>
            <person name="Matsuda H."/>
            <person name="Matsuzawa S."/>
            <person name="Miki H."/>
            <person name="Mignone F."/>
            <person name="Miyake S."/>
            <person name="Morris K."/>
            <person name="Mottagui-Tabar S."/>
            <person name="Mulder N."/>
            <person name="Nakano N."/>
            <person name="Nakauchi H."/>
            <person name="Ng P."/>
            <person name="Nilsson R."/>
            <person name="Nishiguchi S."/>
            <person name="Nishikawa S."/>
            <person name="Nori F."/>
            <person name="Ohara O."/>
            <person name="Okazaki Y."/>
            <person name="Orlando V."/>
            <person name="Pang K.C."/>
            <person name="Pavan W.J."/>
            <person name="Pavesi G."/>
            <person name="Pesole G."/>
            <person name="Petrovsky N."/>
            <person name="Piazza S."/>
            <person name="Reed J."/>
            <person name="Reid J.F."/>
            <person name="Ring B.Z."/>
            <person name="Ringwald M."/>
            <person name="Rost B."/>
            <person name="Ruan Y."/>
            <person name="Salzberg S.L."/>
            <person name="Sandelin A."/>
            <person name="Schneider C."/>
            <person name="Schoenbach C."/>
            <person name="Sekiguchi K."/>
            <person name="Semple C.A."/>
            <person name="Seno S."/>
            <person name="Sessa L."/>
            <person name="Sheng Y."/>
            <person name="Shibata Y."/>
            <person name="Shimada H."/>
            <person name="Shimada K."/>
            <person name="Silva D."/>
            <person name="Sinclair B."/>
            <person name="Sperling S."/>
            <person name="Stupka E."/>
            <person name="Sugiura K."/>
            <person name="Sultana R."/>
            <person name="Takenaka Y."/>
            <person name="Taki K."/>
            <person name="Tammoja K."/>
            <person name="Tan S.L."/>
            <person name="Tang S."/>
            <person name="Taylor M.S."/>
            <person name="Tegner J."/>
            <person name="Teichmann S.A."/>
            <person name="Ueda H.R."/>
            <person name="van Nimwegen E."/>
            <person name="Verardo R."/>
            <person name="Wei C.L."/>
            <person name="Yagi K."/>
            <person name="Yamanishi H."/>
            <person name="Zabarovsky E."/>
            <person name="Zhu S."/>
            <person name="Zimmer A."/>
            <person name="Hide W."/>
            <person name="Bult C."/>
            <person name="Grimmond S.M."/>
            <person name="Teasdale R.D."/>
            <person name="Liu E.T."/>
            <person name="Brusic V."/>
            <person name="Quackenbush J."/>
            <person name="Wahlestedt C."/>
            <person name="Mattick J.S."/>
            <person name="Hume D.A."/>
            <person name="Kai C."/>
            <person name="Sasaki D."/>
            <person name="Tomaru Y."/>
            <person name="Fukuda S."/>
            <person name="Kanamori-Katayama M."/>
            <person name="Suzuki M."/>
            <person name="Aoki J."/>
            <person name="Arakawa T."/>
            <person name="Iida J."/>
            <person name="Imamura K."/>
            <person name="Itoh M."/>
            <person name="Kato T."/>
            <person name="Kawaji H."/>
            <person name="Kawagashira N."/>
            <person name="Kawashima T."/>
            <person name="Kojima M."/>
            <person name="Kondo S."/>
            <person name="Konno H."/>
            <person name="Nakano K."/>
            <person name="Ninomiya N."/>
            <person name="Nishio T."/>
            <person name="Okada M."/>
            <person name="Plessy C."/>
            <person name="Shibata K."/>
            <person name="Shiraki T."/>
            <person name="Suzuki S."/>
            <person name="Tagami M."/>
            <person name="Waki K."/>
            <person name="Watahiki A."/>
            <person name="Okamura-Oho Y."/>
            <person name="Suzuki H."/>
            <person name="Kawai J."/>
            <person name="Hayashizaki Y."/>
        </authorList>
    </citation>
    <scope>NUCLEOTIDE SEQUENCE [LARGE SCALE MRNA]</scope>
    <source>
        <strain>BALB/cJ</strain>
        <strain>C57BL/6J</strain>
        <tissue>Bone marrow</tissue>
    </source>
</reference>
<reference key="2">
    <citation type="journal article" date="2004" name="Genome Res.">
        <title>The status, quality, and expansion of the NIH full-length cDNA project: the Mammalian Gene Collection (MGC).</title>
        <authorList>
            <consortium name="The MGC Project Team"/>
        </authorList>
    </citation>
    <scope>NUCLEOTIDE SEQUENCE [LARGE SCALE MRNA]</scope>
    <source>
        <strain>FVB/N</strain>
        <tissue>Mammary tumor</tissue>
        <tissue>Salivary gland</tissue>
    </source>
</reference>
<reference key="3">
    <citation type="submission" date="2007-04" db="UniProtKB">
        <authorList>
            <person name="Lubec G."/>
            <person name="Klug S."/>
            <person name="Kang S.U."/>
        </authorList>
    </citation>
    <scope>PROTEIN SEQUENCE OF 57-73; 76-108; 128-138; 158-166; 172-179; 210-216; 255-266; 272-323; 373-421; 424-437 AND 441-463</scope>
    <scope>IDENTIFICATION BY MASS SPECTROMETRY</scope>
    <source>
        <strain>C57BL/6J</strain>
        <tissue>Brain</tissue>
        <tissue>Hippocampus</tissue>
    </source>
</reference>
<reference key="4">
    <citation type="journal article" date="2010" name="Cell">
        <title>A tissue-specific atlas of mouse protein phosphorylation and expression.</title>
        <authorList>
            <person name="Huttlin E.L."/>
            <person name="Jedrychowski M.P."/>
            <person name="Elias J.E."/>
            <person name="Goswami T."/>
            <person name="Rad R."/>
            <person name="Beausoleil S.A."/>
            <person name="Villen J."/>
            <person name="Haas W."/>
            <person name="Sowa M.E."/>
            <person name="Gygi S.P."/>
        </authorList>
    </citation>
    <scope>IDENTIFICATION BY MASS SPECTROMETRY [LARGE SCALE ANALYSIS]</scope>
    <source>
        <tissue>Brain</tissue>
        <tissue>Brown adipose tissue</tissue>
        <tissue>Heart</tissue>
        <tissue>Kidney</tissue>
        <tissue>Liver</tissue>
        <tissue>Lung</tissue>
        <tissue>Pancreas</tissue>
        <tissue>Spleen</tissue>
        <tissue>Testis</tissue>
    </source>
</reference>
<reference key="5">
    <citation type="journal article" date="2013" name="Proc. Natl. Acad. Sci. U.S.A.">
        <title>Label-free quantitative proteomics of the lysine acetylome in mitochondria identifies substrates of SIRT3 in metabolic pathways.</title>
        <authorList>
            <person name="Rardin M.J."/>
            <person name="Newman J.C."/>
            <person name="Held J.M."/>
            <person name="Cusack M.P."/>
            <person name="Sorensen D.J."/>
            <person name="Li B."/>
            <person name="Schilling B."/>
            <person name="Mooney S.D."/>
            <person name="Kahn C.R."/>
            <person name="Verdin E."/>
            <person name="Gibson B.W."/>
        </authorList>
    </citation>
    <scope>ACETYLATION [LARGE SCALE ANALYSIS] AT LYS-62</scope>
    <scope>IDENTIFICATION BY MASS SPECTROMETRY [LARGE SCALE ANALYSIS]</scope>
    <source>
        <tissue>Liver</tissue>
    </source>
</reference>
<reference key="6">
    <citation type="journal article" date="2015" name="Cell Metab.">
        <title>Oxygen Sensing by Arterial Chemoreceptors Depends on Mitochondrial Complex I Signaling.</title>
        <authorList>
            <person name="Fernandez-Agueera M.C."/>
            <person name="Gao L."/>
            <person name="Gonzalez-Rodriguez P."/>
            <person name="Pintado C.O."/>
            <person name="Arias-Mayenco I."/>
            <person name="Garcia-Flores P."/>
            <person name="Garcia-Perganeda A."/>
            <person name="Pascual A."/>
            <person name="Ortega-Saenz P."/>
            <person name="Lopez-Barneo J."/>
        </authorList>
    </citation>
    <scope>FUNCTION</scope>
    <scope>CATALYTIC ACTIVITY</scope>
</reference>
<reference key="7">
    <citation type="journal article" date="2018" name="Cell Metab.">
        <title>Acute O2 Sensing: Role of Coenzyme QH2/Q Ratio and Mitochondrial ROS Compartmentalization.</title>
        <authorList>
            <person name="Arias-Mayenco I."/>
            <person name="Gonzalez-Rodriguez P."/>
            <person name="Torres-Torrelo H."/>
            <person name="Gao L."/>
            <person name="Fernandez-Agueera M.C."/>
            <person name="Bonilla-Henao V."/>
            <person name="Ortega-Saenz P."/>
            <person name="Lopez-Barneo J."/>
        </authorList>
    </citation>
    <scope>FUNCTION</scope>
    <scope>CATALYTIC ACTIVITY</scope>
</reference>
<reference key="8">
    <citation type="journal article" date="2019" name="Circ. Res.">
        <title>Ndufs2, a Core Subunit of Mitochondrial Complex I, Is Essential for Acute Oxygen-Sensing and Hypoxic Pulmonary Vasoconstriction.</title>
        <authorList>
            <person name="Dunham-Snary K.J."/>
            <person name="Wu D."/>
            <person name="Potus F."/>
            <person name="Sykes E.A."/>
            <person name="Mewburn J.D."/>
            <person name="Charles R.L."/>
            <person name="Eaton P."/>
            <person name="Sultanian R.A."/>
            <person name="Archer S.L."/>
        </authorList>
    </citation>
    <scope>FUNCTION</scope>
</reference>
<reference key="9">
    <citation type="journal article" date="2019" name="Front. Neurosci.">
        <title>Mitochondrial Complex I Function Is Essential for Neural Stem/Progenitor Cells Proliferation and Differentiation.</title>
        <authorList>
            <person name="Cabello-Rivera D."/>
            <person name="Sarmiento-Soto H."/>
            <person name="Lopez-Barneo J."/>
            <person name="Munoz-Cabello A.M."/>
        </authorList>
    </citation>
    <scope>FUNCTION</scope>
    <scope>CATALYTIC ACTIVITY</scope>
    <scope>DISRUPTION PHENOTYPE</scope>
</reference>
<reference key="10">
    <citation type="journal article" date="2020" name="Biochem. Biophys. Res. Commun.">
        <title>LASS2 regulates hepatocyte steatosis by interacting with NDUFS2/OXPHOS related proteins.</title>
        <authorList>
            <person name="Yang Y."/>
            <person name="Yang X."/>
            <person name="Lin Y."/>
            <person name="Yang G."/>
            <person name="Li L."/>
        </authorList>
    </citation>
    <scope>INTERACTION WITH CERS2</scope>
</reference>
<reference evidence="11" key="11">
    <citation type="journal article" date="2024" name="Nat. Struct. Mol. Biol.">
        <title>SCAF1 drives the compositional diversity of mammalian respirasomes.</title>
        <authorList>
            <person name="Vercellino I."/>
            <person name="Sazanov L.A."/>
        </authorList>
    </citation>
    <scope>STRUCTURE BY ELECTRON MICROSCOPY (3.60 ANGSTROMS) IN COMPLEX WITH MITOCHONDRIAL RESPIRATORY SUPERCOMPLEX</scope>
    <scope>FUNCTION</scope>
    <scope>SUBCELLULAR LOCATION</scope>
    <scope>SUBUNIT</scope>
</reference>
<comment type="function">
    <text evidence="4 5 6 7 9">Core subunit of the mitochondrial membrane respiratory chain NADH dehydrogenase (Complex I) which catalyzes electron transfer from NADH through the respiratory chain, using ubiquinone as an electron acceptor (PubMed:26437605, PubMed:29887397, PubMed:31297047, PubMed:38575788). Essential for the catalytic activity and assembly of complex I (PubMed:26437605, PubMed:29887397, PubMed:31297047). Redox-sensitive, critical component of the oxygen-sensing pathway in the pulmonary vasculature which plays a key role in acute pulmonary oxygen-sensing and hypoxic pulmonary vasoconstriction (PubMed:30922174). Plays an important role in carotid body sensing of hypoxia (PubMed:26437605, PubMed:29887397). Essential for glia-like neural stem and progenitor cell proliferation, differentiation and subsequent oligodendrocyte or neuronal maturation (PubMed:31297047).</text>
</comment>
<comment type="catalytic activity">
    <reaction evidence="4 5 7">
        <text>a ubiquinone + NADH + 5 H(+)(in) = a ubiquinol + NAD(+) + 4 H(+)(out)</text>
        <dbReference type="Rhea" id="RHEA:29091"/>
        <dbReference type="Rhea" id="RHEA-COMP:9565"/>
        <dbReference type="Rhea" id="RHEA-COMP:9566"/>
        <dbReference type="ChEBI" id="CHEBI:15378"/>
        <dbReference type="ChEBI" id="CHEBI:16389"/>
        <dbReference type="ChEBI" id="CHEBI:17976"/>
        <dbReference type="ChEBI" id="CHEBI:57540"/>
        <dbReference type="ChEBI" id="CHEBI:57945"/>
        <dbReference type="EC" id="7.1.1.2"/>
    </reaction>
</comment>
<comment type="cofactor">
    <cofactor>
        <name>[4Fe-4S] cluster</name>
        <dbReference type="ChEBI" id="CHEBI:49883"/>
    </cofactor>
    <text>Binds 1 [4Fe-4S] cluster.</text>
</comment>
<comment type="subunit">
    <text evidence="1 8 9">Core subunit of respiratory chain NADH dehydrogenase (Complex I) which is composed of 45 different subunits (PubMed:38575788). Component of the iron-sulfur (IP) fragment of the enzyme. Interacts with NDUFAF3. Interacts with NDUFAF7 (By similarity). Interacts with CERS2 (PubMed:32279995).</text>
</comment>
<comment type="subcellular location">
    <subcellularLocation>
        <location evidence="9">Mitochondrion inner membrane</location>
        <topology evidence="9">Peripheral membrane protein</topology>
        <orientation evidence="9">Matrix side</orientation>
    </subcellularLocation>
</comment>
<comment type="PTM">
    <text evidence="1">Dimethylation at Arg-118 by NDUFAF7 takes place after NDUFS2 assembles into the complex I, leading to stabilize the early intermediate complex.</text>
</comment>
<comment type="disruption phenotype">
    <text evidence="7">Knockout mice show early perinatal death and major defects in the CNS, compromising especially the postnatal development of dorsal cortex, corpus callosum, hippocampus and cerebellum (PubMed:31297047). Neonatal neurogenesis and gliogenesis are deeply impaired (PubMed:31297047).</text>
</comment>
<comment type="similarity">
    <text evidence="10">Belongs to the complex I 49 kDa subunit family.</text>
</comment>
<comment type="sequence caution" evidence="10">
    <conflict type="erroneous initiation">
        <sequence resource="EMBL-CDS" id="AAH03898"/>
    </conflict>
</comment>
<keyword id="KW-0002">3D-structure</keyword>
<keyword id="KW-0004">4Fe-4S</keyword>
<keyword id="KW-0007">Acetylation</keyword>
<keyword id="KW-0903">Direct protein sequencing</keyword>
<keyword id="KW-0249">Electron transport</keyword>
<keyword id="KW-0408">Iron</keyword>
<keyword id="KW-0411">Iron-sulfur</keyword>
<keyword id="KW-0472">Membrane</keyword>
<keyword id="KW-0479">Metal-binding</keyword>
<keyword id="KW-0488">Methylation</keyword>
<keyword id="KW-0496">Mitochondrion</keyword>
<keyword id="KW-0999">Mitochondrion inner membrane</keyword>
<keyword id="KW-0520">NAD</keyword>
<keyword id="KW-0560">Oxidoreductase</keyword>
<keyword id="KW-1185">Reference proteome</keyword>
<keyword id="KW-0679">Respiratory chain</keyword>
<keyword id="KW-0809">Transit peptide</keyword>
<keyword id="KW-1278">Translocase</keyword>
<keyword id="KW-0813">Transport</keyword>
<keyword id="KW-0830">Ubiquinone</keyword>
<proteinExistence type="evidence at protein level"/>
<protein>
    <recommendedName>
        <fullName>NADH dehydrogenase [ubiquinone] iron-sulfur protein 2, mitochondrial</fullName>
        <ecNumber evidence="4 5 7">7.1.1.2</ecNumber>
    </recommendedName>
    <alternativeName>
        <fullName>Complex I-49kD</fullName>
        <shortName>CI-49kD</shortName>
    </alternativeName>
    <alternativeName>
        <fullName>NADH-ubiquinone oxidoreductase 49 kDa subunit</fullName>
    </alternativeName>
</protein>
<evidence type="ECO:0000250" key="1">
    <source>
        <dbReference type="UniProtKB" id="O75306"/>
    </source>
</evidence>
<evidence type="ECO:0000250" key="2">
    <source>
        <dbReference type="UniProtKB" id="P17694"/>
    </source>
</evidence>
<evidence type="ECO:0000255" key="3"/>
<evidence type="ECO:0000269" key="4">
    <source>
    </source>
</evidence>
<evidence type="ECO:0000269" key="5">
    <source>
    </source>
</evidence>
<evidence type="ECO:0000269" key="6">
    <source>
    </source>
</evidence>
<evidence type="ECO:0000269" key="7">
    <source>
    </source>
</evidence>
<evidence type="ECO:0000269" key="8">
    <source>
    </source>
</evidence>
<evidence type="ECO:0000269" key="9">
    <source>
    </source>
</evidence>
<evidence type="ECO:0000305" key="10"/>
<evidence type="ECO:0007744" key="11">
    <source>
        <dbReference type="PDB" id="8PW5"/>
    </source>
</evidence>
<evidence type="ECO:0007744" key="12">
    <source>
    </source>
</evidence>
<evidence type="ECO:0007829" key="13">
    <source>
        <dbReference type="PDB" id="6ZTQ"/>
    </source>
</evidence>
<evidence type="ECO:0007829" key="14">
    <source>
        <dbReference type="PDB" id="8OM1"/>
    </source>
</evidence>
<evidence type="ECO:0007829" key="15">
    <source>
        <dbReference type="PDB" id="8RGP"/>
    </source>
</evidence>
<evidence type="ECO:0007829" key="16">
    <source>
        <dbReference type="PDB" id="8XNL"/>
    </source>
</evidence>